<accession>P49935</accession>
<accession>Q3UCD6</accession>
<evidence type="ECO:0000250" key="1"/>
<evidence type="ECO:0000255" key="2"/>
<evidence type="ECO:0000255" key="3">
    <source>
        <dbReference type="PROSITE-ProRule" id="PRU10088"/>
    </source>
</evidence>
<evidence type="ECO:0000255" key="4">
    <source>
        <dbReference type="PROSITE-ProRule" id="PRU10089"/>
    </source>
</evidence>
<evidence type="ECO:0000255" key="5">
    <source>
        <dbReference type="PROSITE-ProRule" id="PRU10090"/>
    </source>
</evidence>
<evidence type="ECO:0000269" key="6">
    <source>
    </source>
</evidence>
<evidence type="ECO:0000269" key="7">
    <source>
    </source>
</evidence>
<evidence type="ECO:0000305" key="8"/>
<keyword id="KW-1015">Disulfide bond</keyword>
<keyword id="KW-0325">Glycoprotein</keyword>
<keyword id="KW-0378">Hydrolase</keyword>
<keyword id="KW-0458">Lysosome</keyword>
<keyword id="KW-0645">Protease</keyword>
<keyword id="KW-1185">Reference proteome</keyword>
<keyword id="KW-0732">Signal</keyword>
<keyword id="KW-0788">Thiol protease</keyword>
<keyword id="KW-0865">Zymogen</keyword>
<proteinExistence type="evidence at protein level"/>
<feature type="signal peptide" evidence="2">
    <location>
        <begin position="1"/>
        <end position="20"/>
    </location>
</feature>
<feature type="propeptide" id="PRO_0000026212" description="Activation peptide">
    <location>
        <begin position="21"/>
        <end position="95"/>
    </location>
</feature>
<feature type="chain" id="PRO_0000026213" description="Cathepsin H mini chain" evidence="1">
    <location>
        <begin position="96"/>
        <end position="103"/>
    </location>
</feature>
<feature type="propeptide" id="PRO_0000026214" evidence="2">
    <location>
        <begin position="104"/>
        <end position="113"/>
    </location>
</feature>
<feature type="chain" id="PRO_0000026215" description="Cathepsin H" evidence="1">
    <location>
        <begin position="114"/>
        <end position="333"/>
    </location>
</feature>
<feature type="chain" id="PRO_0000026216" description="Cathepsin H heavy chain" evidence="1">
    <location>
        <begin position="114"/>
        <end position="290"/>
    </location>
</feature>
<feature type="chain" id="PRO_0000026217" description="Cathepsin H light chain" evidence="1">
    <location>
        <begin position="291"/>
        <end position="333"/>
    </location>
</feature>
<feature type="active site" evidence="1">
    <location>
        <position position="139"/>
    </location>
</feature>
<feature type="active site" evidence="1">
    <location>
        <position position="279"/>
    </location>
</feature>
<feature type="active site" evidence="1">
    <location>
        <position position="299"/>
    </location>
</feature>
<feature type="glycosylation site" description="N-linked (GlcNAc...) asparagine" evidence="2">
    <location>
        <position position="70"/>
    </location>
</feature>
<feature type="glycosylation site" description="N-linked (GlcNAc...) asparagine" evidence="2">
    <location>
        <position position="99"/>
    </location>
</feature>
<feature type="glycosylation site" description="N-linked (GlcNAc...) asparagine" evidence="2">
    <location>
        <position position="228"/>
    </location>
</feature>
<feature type="disulfide bond" evidence="1">
    <location>
        <begin position="100"/>
        <end position="325"/>
    </location>
</feature>
<feature type="disulfide bond" evidence="1">
    <location>
        <begin position="136"/>
        <end position="179"/>
    </location>
</feature>
<feature type="disulfide bond" evidence="1">
    <location>
        <begin position="170"/>
        <end position="212"/>
    </location>
</feature>
<feature type="disulfide bond" evidence="1">
    <location>
        <begin position="270"/>
        <end position="320"/>
    </location>
</feature>
<feature type="sequence conflict" description="In Ref. 1; AAA82966." evidence="8" ref="1">
    <original>G</original>
    <variation>A</variation>
    <location>
        <position position="137"/>
    </location>
</feature>
<gene>
    <name type="primary">Ctsh</name>
</gene>
<name>CATH_MOUSE</name>
<reference key="1">
    <citation type="journal article" date="1995" name="J. Leukoc. Biol.">
        <title>IFN-gamma increases cathepsin H mRNA levels in mouse macrophages.</title>
        <authorList>
            <person name="Lafuse W.P."/>
            <person name="Brown D."/>
            <person name="Castle L."/>
            <person name="Zwilling B.S."/>
        </authorList>
    </citation>
    <scope>NUCLEOTIDE SEQUENCE [MRNA]</scope>
</reference>
<reference key="2">
    <citation type="journal article" date="2005" name="Science">
        <title>The transcriptional landscape of the mammalian genome.</title>
        <authorList>
            <person name="Carninci P."/>
            <person name="Kasukawa T."/>
            <person name="Katayama S."/>
            <person name="Gough J."/>
            <person name="Frith M.C."/>
            <person name="Maeda N."/>
            <person name="Oyama R."/>
            <person name="Ravasi T."/>
            <person name="Lenhard B."/>
            <person name="Wells C."/>
            <person name="Kodzius R."/>
            <person name="Shimokawa K."/>
            <person name="Bajic V.B."/>
            <person name="Brenner S.E."/>
            <person name="Batalov S."/>
            <person name="Forrest A.R."/>
            <person name="Zavolan M."/>
            <person name="Davis M.J."/>
            <person name="Wilming L.G."/>
            <person name="Aidinis V."/>
            <person name="Allen J.E."/>
            <person name="Ambesi-Impiombato A."/>
            <person name="Apweiler R."/>
            <person name="Aturaliya R.N."/>
            <person name="Bailey T.L."/>
            <person name="Bansal M."/>
            <person name="Baxter L."/>
            <person name="Beisel K.W."/>
            <person name="Bersano T."/>
            <person name="Bono H."/>
            <person name="Chalk A.M."/>
            <person name="Chiu K.P."/>
            <person name="Choudhary V."/>
            <person name="Christoffels A."/>
            <person name="Clutterbuck D.R."/>
            <person name="Crowe M.L."/>
            <person name="Dalla E."/>
            <person name="Dalrymple B.P."/>
            <person name="de Bono B."/>
            <person name="Della Gatta G."/>
            <person name="di Bernardo D."/>
            <person name="Down T."/>
            <person name="Engstrom P."/>
            <person name="Fagiolini M."/>
            <person name="Faulkner G."/>
            <person name="Fletcher C.F."/>
            <person name="Fukushima T."/>
            <person name="Furuno M."/>
            <person name="Futaki S."/>
            <person name="Gariboldi M."/>
            <person name="Georgii-Hemming P."/>
            <person name="Gingeras T.R."/>
            <person name="Gojobori T."/>
            <person name="Green R.E."/>
            <person name="Gustincich S."/>
            <person name="Harbers M."/>
            <person name="Hayashi Y."/>
            <person name="Hensch T.K."/>
            <person name="Hirokawa N."/>
            <person name="Hill D."/>
            <person name="Huminiecki L."/>
            <person name="Iacono M."/>
            <person name="Ikeo K."/>
            <person name="Iwama A."/>
            <person name="Ishikawa T."/>
            <person name="Jakt M."/>
            <person name="Kanapin A."/>
            <person name="Katoh M."/>
            <person name="Kawasawa Y."/>
            <person name="Kelso J."/>
            <person name="Kitamura H."/>
            <person name="Kitano H."/>
            <person name="Kollias G."/>
            <person name="Krishnan S.P."/>
            <person name="Kruger A."/>
            <person name="Kummerfeld S.K."/>
            <person name="Kurochkin I.V."/>
            <person name="Lareau L.F."/>
            <person name="Lazarevic D."/>
            <person name="Lipovich L."/>
            <person name="Liu J."/>
            <person name="Liuni S."/>
            <person name="McWilliam S."/>
            <person name="Madan Babu M."/>
            <person name="Madera M."/>
            <person name="Marchionni L."/>
            <person name="Matsuda H."/>
            <person name="Matsuzawa S."/>
            <person name="Miki H."/>
            <person name="Mignone F."/>
            <person name="Miyake S."/>
            <person name="Morris K."/>
            <person name="Mottagui-Tabar S."/>
            <person name="Mulder N."/>
            <person name="Nakano N."/>
            <person name="Nakauchi H."/>
            <person name="Ng P."/>
            <person name="Nilsson R."/>
            <person name="Nishiguchi S."/>
            <person name="Nishikawa S."/>
            <person name="Nori F."/>
            <person name="Ohara O."/>
            <person name="Okazaki Y."/>
            <person name="Orlando V."/>
            <person name="Pang K.C."/>
            <person name="Pavan W.J."/>
            <person name="Pavesi G."/>
            <person name="Pesole G."/>
            <person name="Petrovsky N."/>
            <person name="Piazza S."/>
            <person name="Reed J."/>
            <person name="Reid J.F."/>
            <person name="Ring B.Z."/>
            <person name="Ringwald M."/>
            <person name="Rost B."/>
            <person name="Ruan Y."/>
            <person name="Salzberg S.L."/>
            <person name="Sandelin A."/>
            <person name="Schneider C."/>
            <person name="Schoenbach C."/>
            <person name="Sekiguchi K."/>
            <person name="Semple C.A."/>
            <person name="Seno S."/>
            <person name="Sessa L."/>
            <person name="Sheng Y."/>
            <person name="Shibata Y."/>
            <person name="Shimada H."/>
            <person name="Shimada K."/>
            <person name="Silva D."/>
            <person name="Sinclair B."/>
            <person name="Sperling S."/>
            <person name="Stupka E."/>
            <person name="Sugiura K."/>
            <person name="Sultana R."/>
            <person name="Takenaka Y."/>
            <person name="Taki K."/>
            <person name="Tammoja K."/>
            <person name="Tan S.L."/>
            <person name="Tang S."/>
            <person name="Taylor M.S."/>
            <person name="Tegner J."/>
            <person name="Teichmann S.A."/>
            <person name="Ueda H.R."/>
            <person name="van Nimwegen E."/>
            <person name="Verardo R."/>
            <person name="Wei C.L."/>
            <person name="Yagi K."/>
            <person name="Yamanishi H."/>
            <person name="Zabarovsky E."/>
            <person name="Zhu S."/>
            <person name="Zimmer A."/>
            <person name="Hide W."/>
            <person name="Bult C."/>
            <person name="Grimmond S.M."/>
            <person name="Teasdale R.D."/>
            <person name="Liu E.T."/>
            <person name="Brusic V."/>
            <person name="Quackenbush J."/>
            <person name="Wahlestedt C."/>
            <person name="Mattick J.S."/>
            <person name="Hume D.A."/>
            <person name="Kai C."/>
            <person name="Sasaki D."/>
            <person name="Tomaru Y."/>
            <person name="Fukuda S."/>
            <person name="Kanamori-Katayama M."/>
            <person name="Suzuki M."/>
            <person name="Aoki J."/>
            <person name="Arakawa T."/>
            <person name="Iida J."/>
            <person name="Imamura K."/>
            <person name="Itoh M."/>
            <person name="Kato T."/>
            <person name="Kawaji H."/>
            <person name="Kawagashira N."/>
            <person name="Kawashima T."/>
            <person name="Kojima M."/>
            <person name="Kondo S."/>
            <person name="Konno H."/>
            <person name="Nakano K."/>
            <person name="Ninomiya N."/>
            <person name="Nishio T."/>
            <person name="Okada M."/>
            <person name="Plessy C."/>
            <person name="Shibata K."/>
            <person name="Shiraki T."/>
            <person name="Suzuki S."/>
            <person name="Tagami M."/>
            <person name="Waki K."/>
            <person name="Watahiki A."/>
            <person name="Okamura-Oho Y."/>
            <person name="Suzuki H."/>
            <person name="Kawai J."/>
            <person name="Hayashizaki Y."/>
        </authorList>
    </citation>
    <scope>NUCLEOTIDE SEQUENCE [LARGE SCALE MRNA]</scope>
    <source>
        <strain>C57BL/6J</strain>
        <strain>NOD</strain>
        <tissue>Bone marrow</tissue>
        <tissue>Spleen</tissue>
    </source>
</reference>
<reference key="3">
    <citation type="submission" date="2005-07" db="EMBL/GenBank/DDBJ databases">
        <authorList>
            <person name="Mural R.J."/>
            <person name="Adams M.D."/>
            <person name="Myers E.W."/>
            <person name="Smith H.O."/>
            <person name="Venter J.C."/>
        </authorList>
    </citation>
    <scope>NUCLEOTIDE SEQUENCE [LARGE SCALE GENOMIC DNA]</scope>
</reference>
<reference key="4">
    <citation type="journal article" date="1999" name="Biochim. Biophys. Acta">
        <title>Cathepsin expression during skeletal development.</title>
        <authorList>
            <person name="Soederstroem M."/>
            <person name="Salminen H."/>
            <person name="Glumoff V."/>
            <person name="Kirschke H."/>
            <person name="Aro H."/>
            <person name="Vuorio E."/>
        </authorList>
    </citation>
    <scope>NUCLEOTIDE SEQUENCE [MRNA] OF 136-301</scope>
    <scope>TISSUE SPECIFICITY</scope>
    <source>
        <strain>C57BL/6J</strain>
        <tissue>Cartilage</tissue>
    </source>
</reference>
<reference key="5">
    <citation type="journal article" date="2010" name="Cell">
        <title>A tissue-specific atlas of mouse protein phosphorylation and expression.</title>
        <authorList>
            <person name="Huttlin E.L."/>
            <person name="Jedrychowski M.P."/>
            <person name="Elias J.E."/>
            <person name="Goswami T."/>
            <person name="Rad R."/>
            <person name="Beausoleil S.A."/>
            <person name="Villen J."/>
            <person name="Haas W."/>
            <person name="Sowa M.E."/>
            <person name="Gygi S.P."/>
        </authorList>
    </citation>
    <scope>IDENTIFICATION BY MASS SPECTROMETRY [LARGE SCALE ANALYSIS]</scope>
    <source>
        <tissue>Brown adipose tissue</tissue>
        <tissue>Kidney</tissue>
        <tissue>Liver</tissue>
        <tissue>Lung</tissue>
        <tissue>Spleen</tissue>
        <tissue>Testis</tissue>
    </source>
</reference>
<reference key="6">
    <citation type="journal article" date="2013" name="Am. J. Hum. Genet.">
        <title>Mutations in LRPAP1 are associated with severe myopia in humans.</title>
        <authorList>
            <person name="Aldahmesh M.A."/>
            <person name="Khan A.O."/>
            <person name="Alkuraya H."/>
            <person name="Adly N."/>
            <person name="Anazi S."/>
            <person name="Al-Saleh A.A."/>
            <person name="Mohamed J.Y."/>
            <person name="Hijazi H."/>
            <person name="Prabakaran S."/>
            <person name="Tacke M."/>
            <person name="Al-Khrashi A."/>
            <person name="Hashem M."/>
            <person name="Reinheckel T."/>
            <person name="Assiri A."/>
            <person name="Alkuraya F.S."/>
        </authorList>
    </citation>
    <scope>DISRUPTION PHENOTYPE</scope>
</reference>
<sequence>MWAALPLLCAGAWLLSTGATAELTVNAIEKFHFKSWMKQHQKTYSSVEYNHRLQMFANNWRKIQAHNQRNHTFKMALNQFSDMSFAEIKHKFLWSEPQNCSATKSNYLRGTGPYPSSMDWRKKGNVVSPVKNQGACGSCWTFSTTGALESAVAIASGKMLSLAEQQLVDCAQAFNNHGCKGGLPSQAFEYILYNKGIMEEDSYPYIGKDSSCRFNPQKAVAFVKNVVNITLNDEAAMVEAVALYNPVSFAFEVTEDFLMYKSGVYSSKSCHKTPDKVNHAVLAVGYGEQNGLLYWIVKNSWGSQWGENGYFLIERGKNMCGLAACASYPIPQV</sequence>
<comment type="function">
    <text>Important for the overall degradation of proteins in lysosomes.</text>
</comment>
<comment type="catalytic activity">
    <reaction>
        <text>Hydrolysis of proteins, acting as an aminopeptidase (notably, cleaving Arg-|-Xaa bonds) as well as an endopeptidase.</text>
        <dbReference type="EC" id="3.4.22.16"/>
    </reaction>
</comment>
<comment type="subunit">
    <text>Composed of a mini chain and a large chain. The large chain may be split into heavy and light chain. All chains are held together by disulfide bonds.</text>
</comment>
<comment type="subcellular location">
    <subcellularLocation>
        <location>Lysosome</location>
    </subcellularLocation>
</comment>
<comment type="tissue specificity">
    <text evidence="6">Widely expressed with highest expression found in non-skeletal tissues. Low levels found in skeletal tissue.</text>
</comment>
<comment type="disruption phenotype">
    <text evidence="7">Mice exhibit markedly abnormal posterior chamber of eyeball with a configuration suggestive of increased axial lengthening, compared to the rounded appearance in wild-type littermates.</text>
</comment>
<comment type="similarity">
    <text evidence="3 4 5">Belongs to the peptidase C1 family.</text>
</comment>
<protein>
    <recommendedName>
        <fullName>Pro-cathepsin H</fullName>
    </recommendedName>
    <alternativeName>
        <fullName>Cathepsin B3</fullName>
    </alternativeName>
    <alternativeName>
        <fullName>Cathepsin BA</fullName>
    </alternativeName>
    <component>
        <recommendedName>
            <fullName>Cathepsin H mini chain</fullName>
        </recommendedName>
    </component>
    <component>
        <recommendedName>
            <fullName>Cathepsin H</fullName>
            <ecNumber>3.4.22.16</ecNumber>
        </recommendedName>
    </component>
    <component>
        <recommendedName>
            <fullName>Cathepsin H heavy chain</fullName>
        </recommendedName>
    </component>
    <component>
        <recommendedName>
            <fullName>Cathepsin H light chain</fullName>
        </recommendedName>
    </component>
</protein>
<dbReference type="EC" id="3.4.22.16"/>
<dbReference type="EMBL" id="U06119">
    <property type="protein sequence ID" value="AAA82966.1"/>
    <property type="molecule type" value="mRNA"/>
</dbReference>
<dbReference type="EMBL" id="AK149949">
    <property type="protein sequence ID" value="BAE29188.1"/>
    <property type="molecule type" value="mRNA"/>
</dbReference>
<dbReference type="EMBL" id="AK150583">
    <property type="protein sequence ID" value="BAE29677.1"/>
    <property type="molecule type" value="mRNA"/>
</dbReference>
<dbReference type="EMBL" id="AK157376">
    <property type="protein sequence ID" value="BAE34071.1"/>
    <property type="molecule type" value="mRNA"/>
</dbReference>
<dbReference type="EMBL" id="AK160026">
    <property type="protein sequence ID" value="BAE35569.1"/>
    <property type="molecule type" value="mRNA"/>
</dbReference>
<dbReference type="EMBL" id="CH466560">
    <property type="protein sequence ID" value="EDL20901.1"/>
    <property type="molecule type" value="Genomic_DNA"/>
</dbReference>
<dbReference type="EMBL" id="Y18464">
    <property type="protein sequence ID" value="CAA77182.1"/>
    <property type="molecule type" value="mRNA"/>
</dbReference>
<dbReference type="CCDS" id="CCDS23399.1"/>
<dbReference type="RefSeq" id="NP_001299578.1">
    <property type="nucleotide sequence ID" value="NM_001312649.1"/>
</dbReference>
<dbReference type="RefSeq" id="NP_031827.2">
    <property type="nucleotide sequence ID" value="NM_007801.3"/>
</dbReference>
<dbReference type="SMR" id="P49935"/>
<dbReference type="BioGRID" id="198973">
    <property type="interactions" value="15"/>
</dbReference>
<dbReference type="FunCoup" id="P49935">
    <property type="interactions" value="337"/>
</dbReference>
<dbReference type="STRING" id="10090.ENSMUSP00000034915"/>
<dbReference type="ChEMBL" id="CHEMBL1949491"/>
<dbReference type="MEROPS" id="C01.040"/>
<dbReference type="MEROPS" id="I29.003"/>
<dbReference type="GlyCosmos" id="P49935">
    <property type="glycosylation" value="3 sites, No reported glycans"/>
</dbReference>
<dbReference type="GlyGen" id="P49935">
    <property type="glycosylation" value="3 sites, 1 N-linked glycan (1 site)"/>
</dbReference>
<dbReference type="iPTMnet" id="P49935"/>
<dbReference type="PhosphoSitePlus" id="P49935"/>
<dbReference type="SwissPalm" id="P49935"/>
<dbReference type="jPOST" id="P49935"/>
<dbReference type="PaxDb" id="10090-ENSMUSP00000034915"/>
<dbReference type="PeptideAtlas" id="P49935"/>
<dbReference type="ProteomicsDB" id="265541"/>
<dbReference type="Antibodypedia" id="1041">
    <property type="antibodies" value="391 antibodies from 35 providers"/>
</dbReference>
<dbReference type="DNASU" id="13036"/>
<dbReference type="Ensembl" id="ENSMUST00000034915.15">
    <property type="protein sequence ID" value="ENSMUSP00000034915.9"/>
    <property type="gene ID" value="ENSMUSG00000032359.15"/>
</dbReference>
<dbReference type="GeneID" id="13036"/>
<dbReference type="KEGG" id="mmu:13036"/>
<dbReference type="UCSC" id="uc009qzv.2">
    <property type="organism name" value="mouse"/>
</dbReference>
<dbReference type="AGR" id="MGI:107285"/>
<dbReference type="CTD" id="1512"/>
<dbReference type="MGI" id="MGI:107285">
    <property type="gene designation" value="Ctsh"/>
</dbReference>
<dbReference type="VEuPathDB" id="HostDB:ENSMUSG00000032359"/>
<dbReference type="eggNOG" id="KOG1543">
    <property type="taxonomic scope" value="Eukaryota"/>
</dbReference>
<dbReference type="GeneTree" id="ENSGT00940000160227"/>
<dbReference type="HOGENOM" id="CLU_012184_1_1_1"/>
<dbReference type="InParanoid" id="P49935"/>
<dbReference type="OMA" id="TCKFQPQ"/>
<dbReference type="OrthoDB" id="10253408at2759"/>
<dbReference type="PhylomeDB" id="P49935"/>
<dbReference type="TreeFam" id="TF328985"/>
<dbReference type="BRENDA" id="3.4.22.16">
    <property type="organism ID" value="3474"/>
</dbReference>
<dbReference type="Reactome" id="R-MMU-2132295">
    <property type="pathway name" value="MHC class II antigen presentation"/>
</dbReference>
<dbReference type="Reactome" id="R-MMU-5683826">
    <property type="pathway name" value="Surfactant metabolism"/>
</dbReference>
<dbReference type="Reactome" id="R-MMU-6798695">
    <property type="pathway name" value="Neutrophil degranulation"/>
</dbReference>
<dbReference type="BioGRID-ORCS" id="13036">
    <property type="hits" value="1 hit in 78 CRISPR screens"/>
</dbReference>
<dbReference type="ChiTaRS" id="Ctsh">
    <property type="organism name" value="mouse"/>
</dbReference>
<dbReference type="PRO" id="PR:P49935"/>
<dbReference type="Proteomes" id="UP000000589">
    <property type="component" value="Chromosome 9"/>
</dbReference>
<dbReference type="RNAct" id="P49935">
    <property type="molecule type" value="protein"/>
</dbReference>
<dbReference type="Bgee" id="ENSMUSG00000032359">
    <property type="expression patterns" value="Expressed in left lung lobe and 243 other cell types or tissues"/>
</dbReference>
<dbReference type="ExpressionAtlas" id="P49935">
    <property type="expression patterns" value="baseline and differential"/>
</dbReference>
<dbReference type="GO" id="GO:0001669">
    <property type="term" value="C:acrosomal vesicle"/>
    <property type="evidence" value="ECO:0007669"/>
    <property type="project" value="Ensembl"/>
</dbReference>
<dbReference type="GO" id="GO:0097208">
    <property type="term" value="C:alveolar lamellar body"/>
    <property type="evidence" value="ECO:0000250"/>
    <property type="project" value="UniProtKB"/>
</dbReference>
<dbReference type="GO" id="GO:0005930">
    <property type="term" value="C:axoneme"/>
    <property type="evidence" value="ECO:0007669"/>
    <property type="project" value="Ensembl"/>
</dbReference>
<dbReference type="GO" id="GO:0036464">
    <property type="term" value="C:cytoplasmic ribonucleoprotein granule"/>
    <property type="evidence" value="ECO:0007669"/>
    <property type="project" value="Ensembl"/>
</dbReference>
<dbReference type="GO" id="GO:0005829">
    <property type="term" value="C:cytosol"/>
    <property type="evidence" value="ECO:0000250"/>
    <property type="project" value="UniProtKB"/>
</dbReference>
<dbReference type="GO" id="GO:0005615">
    <property type="term" value="C:extracellular space"/>
    <property type="evidence" value="ECO:0000250"/>
    <property type="project" value="UniProtKB"/>
</dbReference>
<dbReference type="GO" id="GO:0005764">
    <property type="term" value="C:lysosome"/>
    <property type="evidence" value="ECO:0000250"/>
    <property type="project" value="UniProtKB"/>
</dbReference>
<dbReference type="GO" id="GO:0001520">
    <property type="term" value="C:outer dense fiber"/>
    <property type="evidence" value="ECO:0007669"/>
    <property type="project" value="Ensembl"/>
</dbReference>
<dbReference type="GO" id="GO:0004177">
    <property type="term" value="F:aminopeptidase activity"/>
    <property type="evidence" value="ECO:0000250"/>
    <property type="project" value="UniProtKB"/>
</dbReference>
<dbReference type="GO" id="GO:0008656">
    <property type="term" value="F:cysteine-type endopeptidase activator activity involved in apoptotic process"/>
    <property type="evidence" value="ECO:0000316"/>
    <property type="project" value="UniProtKB"/>
</dbReference>
<dbReference type="GO" id="GO:0004197">
    <property type="term" value="F:cysteine-type endopeptidase activity"/>
    <property type="evidence" value="ECO:0000314"/>
    <property type="project" value="UniProtKB"/>
</dbReference>
<dbReference type="GO" id="GO:0008234">
    <property type="term" value="F:cysteine-type peptidase activity"/>
    <property type="evidence" value="ECO:0000250"/>
    <property type="project" value="UniProtKB"/>
</dbReference>
<dbReference type="GO" id="GO:0004175">
    <property type="term" value="F:endopeptidase activity"/>
    <property type="evidence" value="ECO:0000315"/>
    <property type="project" value="UniProtKB"/>
</dbReference>
<dbReference type="GO" id="GO:0030108">
    <property type="term" value="F:HLA-A specific activating MHC class I receptor activity"/>
    <property type="evidence" value="ECO:0000250"/>
    <property type="project" value="UniProtKB"/>
</dbReference>
<dbReference type="GO" id="GO:0042802">
    <property type="term" value="F:identical protein binding"/>
    <property type="evidence" value="ECO:0007669"/>
    <property type="project" value="Ensembl"/>
</dbReference>
<dbReference type="GO" id="GO:0030984">
    <property type="term" value="F:kininogen binding"/>
    <property type="evidence" value="ECO:0007669"/>
    <property type="project" value="Ensembl"/>
</dbReference>
<dbReference type="GO" id="GO:0016505">
    <property type="term" value="F:peptidase activator activity involved in apoptotic process"/>
    <property type="evidence" value="ECO:0000316"/>
    <property type="project" value="MGI"/>
</dbReference>
<dbReference type="GO" id="GO:0044877">
    <property type="term" value="F:protein-containing complex binding"/>
    <property type="evidence" value="ECO:0007669"/>
    <property type="project" value="Ensembl"/>
</dbReference>
<dbReference type="GO" id="GO:0004252">
    <property type="term" value="F:serine-type endopeptidase activity"/>
    <property type="evidence" value="ECO:0000315"/>
    <property type="project" value="UniProtKB"/>
</dbReference>
<dbReference type="GO" id="GO:0070324">
    <property type="term" value="F:thyroid hormone binding"/>
    <property type="evidence" value="ECO:0000250"/>
    <property type="project" value="UniProtKB"/>
</dbReference>
<dbReference type="GO" id="GO:0010815">
    <property type="term" value="P:bradykinin catabolic process"/>
    <property type="evidence" value="ECO:0000250"/>
    <property type="project" value="UniProtKB"/>
</dbReference>
<dbReference type="GO" id="GO:0097067">
    <property type="term" value="P:cellular response to thyroid hormone stimulus"/>
    <property type="evidence" value="ECO:0007669"/>
    <property type="project" value="Ensembl"/>
</dbReference>
<dbReference type="GO" id="GO:0060448">
    <property type="term" value="P:dichotomous subdivision of terminal units involved in lung branching"/>
    <property type="evidence" value="ECO:0000315"/>
    <property type="project" value="UniProtKB"/>
</dbReference>
<dbReference type="GO" id="GO:0070371">
    <property type="term" value="P:ERK1 and ERK2 cascade"/>
    <property type="evidence" value="ECO:0000250"/>
    <property type="project" value="UniProtKB"/>
</dbReference>
<dbReference type="GO" id="GO:0002764">
    <property type="term" value="P:immune response-regulating signaling pathway"/>
    <property type="evidence" value="ECO:0000250"/>
    <property type="project" value="UniProtKB"/>
</dbReference>
<dbReference type="GO" id="GO:1905146">
    <property type="term" value="P:lysosomal protein catabolic process"/>
    <property type="evidence" value="ECO:0007669"/>
    <property type="project" value="Ensembl"/>
</dbReference>
<dbReference type="GO" id="GO:0033619">
    <property type="term" value="P:membrane protein proteolysis"/>
    <property type="evidence" value="ECO:0000315"/>
    <property type="project" value="UniProtKB"/>
</dbReference>
<dbReference type="GO" id="GO:0001656">
    <property type="term" value="P:metanephros development"/>
    <property type="evidence" value="ECO:0000250"/>
    <property type="project" value="UniProtKB"/>
</dbReference>
<dbReference type="GO" id="GO:0010813">
    <property type="term" value="P:neuropeptide catabolic process"/>
    <property type="evidence" value="ECO:0000250"/>
    <property type="project" value="UniProtKB"/>
</dbReference>
<dbReference type="GO" id="GO:2001235">
    <property type="term" value="P:positive regulation of apoptotic signaling pathway"/>
    <property type="evidence" value="ECO:0000316"/>
    <property type="project" value="MGI"/>
</dbReference>
<dbReference type="GO" id="GO:0030335">
    <property type="term" value="P:positive regulation of cell migration"/>
    <property type="evidence" value="ECO:0000250"/>
    <property type="project" value="UniProtKB"/>
</dbReference>
<dbReference type="GO" id="GO:0010634">
    <property type="term" value="P:positive regulation of epithelial cell migration"/>
    <property type="evidence" value="ECO:0000315"/>
    <property type="project" value="UniProtKB"/>
</dbReference>
<dbReference type="GO" id="GO:0010628">
    <property type="term" value="P:positive regulation of gene expression"/>
    <property type="evidence" value="ECO:0000250"/>
    <property type="project" value="UniProtKB"/>
</dbReference>
<dbReference type="GO" id="GO:0031648">
    <property type="term" value="P:protein destabilization"/>
    <property type="evidence" value="ECO:0000315"/>
    <property type="project" value="UniProtKB"/>
</dbReference>
<dbReference type="GO" id="GO:0006508">
    <property type="term" value="P:proteolysis"/>
    <property type="evidence" value="ECO:0000315"/>
    <property type="project" value="UniProtKB"/>
</dbReference>
<dbReference type="GO" id="GO:1990834">
    <property type="term" value="P:response to odorant"/>
    <property type="evidence" value="ECO:0007669"/>
    <property type="project" value="Ensembl"/>
</dbReference>
<dbReference type="GO" id="GO:0032526">
    <property type="term" value="P:response to retinoic acid"/>
    <property type="evidence" value="ECO:0000314"/>
    <property type="project" value="UniProtKB"/>
</dbReference>
<dbReference type="GO" id="GO:0007283">
    <property type="term" value="P:spermatogenesis"/>
    <property type="evidence" value="ECO:0007669"/>
    <property type="project" value="Ensembl"/>
</dbReference>
<dbReference type="GO" id="GO:0043129">
    <property type="term" value="P:surfactant homeostasis"/>
    <property type="evidence" value="ECO:0000250"/>
    <property type="project" value="UniProtKB"/>
</dbReference>
<dbReference type="GO" id="GO:0001913">
    <property type="term" value="P:T cell mediated cytotoxicity"/>
    <property type="evidence" value="ECO:0000316"/>
    <property type="project" value="UniProtKB"/>
</dbReference>
<dbReference type="GO" id="GO:0031638">
    <property type="term" value="P:zymogen activation"/>
    <property type="evidence" value="ECO:0000315"/>
    <property type="project" value="UniProtKB"/>
</dbReference>
<dbReference type="CDD" id="cd02248">
    <property type="entry name" value="Peptidase_C1A"/>
    <property type="match status" value="1"/>
</dbReference>
<dbReference type="FunFam" id="3.90.70.10:FF:000074">
    <property type="entry name" value="Pro-cathepsin H"/>
    <property type="match status" value="1"/>
</dbReference>
<dbReference type="Gene3D" id="3.90.70.10">
    <property type="entry name" value="Cysteine proteinases"/>
    <property type="match status" value="1"/>
</dbReference>
<dbReference type="InterPro" id="IPR038765">
    <property type="entry name" value="Papain-like_cys_pep_sf"/>
</dbReference>
<dbReference type="InterPro" id="IPR025661">
    <property type="entry name" value="Pept_asp_AS"/>
</dbReference>
<dbReference type="InterPro" id="IPR000169">
    <property type="entry name" value="Pept_cys_AS"/>
</dbReference>
<dbReference type="InterPro" id="IPR025660">
    <property type="entry name" value="Pept_his_AS"/>
</dbReference>
<dbReference type="InterPro" id="IPR013128">
    <property type="entry name" value="Peptidase_C1A"/>
</dbReference>
<dbReference type="InterPro" id="IPR000668">
    <property type="entry name" value="Peptidase_C1A_C"/>
</dbReference>
<dbReference type="InterPro" id="IPR039417">
    <property type="entry name" value="Peptidase_C1A_papain-like"/>
</dbReference>
<dbReference type="InterPro" id="IPR013201">
    <property type="entry name" value="Prot_inhib_I29"/>
</dbReference>
<dbReference type="PANTHER" id="PTHR12411">
    <property type="entry name" value="CYSTEINE PROTEASE FAMILY C1-RELATED"/>
    <property type="match status" value="1"/>
</dbReference>
<dbReference type="Pfam" id="PF08246">
    <property type="entry name" value="Inhibitor_I29"/>
    <property type="match status" value="1"/>
</dbReference>
<dbReference type="Pfam" id="PF00112">
    <property type="entry name" value="Peptidase_C1"/>
    <property type="match status" value="1"/>
</dbReference>
<dbReference type="PRINTS" id="PR00705">
    <property type="entry name" value="PAPAIN"/>
</dbReference>
<dbReference type="SMART" id="SM00848">
    <property type="entry name" value="Inhibitor_I29"/>
    <property type="match status" value="1"/>
</dbReference>
<dbReference type="SMART" id="SM00645">
    <property type="entry name" value="Pept_C1"/>
    <property type="match status" value="1"/>
</dbReference>
<dbReference type="SUPFAM" id="SSF54001">
    <property type="entry name" value="Cysteine proteinases"/>
    <property type="match status" value="1"/>
</dbReference>
<dbReference type="PROSITE" id="PS00640">
    <property type="entry name" value="THIOL_PROTEASE_ASN"/>
    <property type="match status" value="1"/>
</dbReference>
<dbReference type="PROSITE" id="PS00139">
    <property type="entry name" value="THIOL_PROTEASE_CYS"/>
    <property type="match status" value="1"/>
</dbReference>
<dbReference type="PROSITE" id="PS00639">
    <property type="entry name" value="THIOL_PROTEASE_HIS"/>
    <property type="match status" value="1"/>
</dbReference>
<organism>
    <name type="scientific">Mus musculus</name>
    <name type="common">Mouse</name>
    <dbReference type="NCBI Taxonomy" id="10090"/>
    <lineage>
        <taxon>Eukaryota</taxon>
        <taxon>Metazoa</taxon>
        <taxon>Chordata</taxon>
        <taxon>Craniata</taxon>
        <taxon>Vertebrata</taxon>
        <taxon>Euteleostomi</taxon>
        <taxon>Mammalia</taxon>
        <taxon>Eutheria</taxon>
        <taxon>Euarchontoglires</taxon>
        <taxon>Glires</taxon>
        <taxon>Rodentia</taxon>
        <taxon>Myomorpha</taxon>
        <taxon>Muroidea</taxon>
        <taxon>Muridae</taxon>
        <taxon>Murinae</taxon>
        <taxon>Mus</taxon>
        <taxon>Mus</taxon>
    </lineage>
</organism>